<name>NS1_I83A8</name>
<sequence length="237" mass="26822">MDSNTVSSFQVDCFLWHVRKQVVDQELSDAPFLDRLRRDQRSLRGRGSTLGLDIKAATHVGKQIVEKILKEESDEALKMTMASTPASRYITDMTIEELSRNWFMLMPKQKVEGPLCIRMDQAIMEKNIMLKANFSVIFDRLETLVLLRAFTEEGAIVGEISPLPSFPGHTIEDVKNAIGVLIGGLEWNDNTVRVSKTLQRFAWGSSNENGGPPLTPKQKRKMARTARSKVRRDKMAD</sequence>
<protein>
    <recommendedName>
        <fullName evidence="1">Non-structural protein 1</fullName>
        <shortName evidence="1">NS1</shortName>
    </recommendedName>
    <alternativeName>
        <fullName evidence="1">NS1A</fullName>
    </alternativeName>
</protein>
<dbReference type="EMBL" id="CY003740">
    <property type="protein sequence ID" value="ABB04944.1"/>
    <property type="molecule type" value="Genomic_RNA"/>
</dbReference>
<dbReference type="PDB" id="4O42">
    <property type="method" value="X-ray"/>
    <property type="resolution" value="1.87 A"/>
    <property type="chains" value="B=216-230"/>
</dbReference>
<dbReference type="PDBsum" id="4O42"/>
<dbReference type="SMR" id="Q38SQ2"/>
<dbReference type="EvolutionaryTrace" id="Q38SQ2"/>
<dbReference type="Proteomes" id="UP000167548">
    <property type="component" value="Genome"/>
</dbReference>
<dbReference type="GO" id="GO:0030430">
    <property type="term" value="C:host cell cytoplasm"/>
    <property type="evidence" value="ECO:0007669"/>
    <property type="project" value="UniProtKB-SubCell"/>
</dbReference>
<dbReference type="GO" id="GO:0042025">
    <property type="term" value="C:host cell nucleus"/>
    <property type="evidence" value="ECO:0007669"/>
    <property type="project" value="UniProtKB-SubCell"/>
</dbReference>
<dbReference type="GO" id="GO:0030291">
    <property type="term" value="F:protein serine/threonine kinase inhibitor activity"/>
    <property type="evidence" value="ECO:0007669"/>
    <property type="project" value="UniProtKB-KW"/>
</dbReference>
<dbReference type="GO" id="GO:0003723">
    <property type="term" value="F:RNA binding"/>
    <property type="evidence" value="ECO:0007669"/>
    <property type="project" value="UniProtKB-KW"/>
</dbReference>
<dbReference type="GO" id="GO:0039540">
    <property type="term" value="P:symbiont-mediated suppression of host cytoplasmic pattern recognition receptor signaling pathway via inhibition of RIG-I activity"/>
    <property type="evidence" value="ECO:0007669"/>
    <property type="project" value="UniProtKB-KW"/>
</dbReference>
<dbReference type="GO" id="GO:0039657">
    <property type="term" value="P:symbiont-mediated suppression of host gene expression"/>
    <property type="evidence" value="ECO:0007669"/>
    <property type="project" value="UniProtKB-KW"/>
</dbReference>
<dbReference type="GO" id="GO:0039524">
    <property type="term" value="P:symbiont-mediated suppression of host mRNA processing"/>
    <property type="evidence" value="ECO:0007669"/>
    <property type="project" value="UniProtKB-KW"/>
</dbReference>
<dbReference type="GO" id="GO:0039580">
    <property type="term" value="P:symbiont-mediated suppression of host PKR/eIFalpha signaling"/>
    <property type="evidence" value="ECO:0007669"/>
    <property type="project" value="UniProtKB-KW"/>
</dbReference>
<dbReference type="GO" id="GO:0039502">
    <property type="term" value="P:symbiont-mediated suppression of host type I interferon-mediated signaling pathway"/>
    <property type="evidence" value="ECO:0007669"/>
    <property type="project" value="UniProtKB-KW"/>
</dbReference>
<dbReference type="FunFam" id="1.10.287.10:FF:000001">
    <property type="entry name" value="Non-structural protein 1"/>
    <property type="match status" value="1"/>
</dbReference>
<dbReference type="FunFam" id="3.30.420.330:FF:000001">
    <property type="entry name" value="Non-structural protein 1"/>
    <property type="match status" value="1"/>
</dbReference>
<dbReference type="Gene3D" id="3.30.420.330">
    <property type="entry name" value="Influenza virus non-structural protein, effector domain"/>
    <property type="match status" value="1"/>
</dbReference>
<dbReference type="Gene3D" id="1.10.287.10">
    <property type="entry name" value="S15/NS1, RNA-binding"/>
    <property type="match status" value="1"/>
</dbReference>
<dbReference type="HAMAP" id="MF_04066">
    <property type="entry name" value="INFV_NS1"/>
    <property type="match status" value="1"/>
</dbReference>
<dbReference type="IDEAL" id="IID90024"/>
<dbReference type="InterPro" id="IPR004208">
    <property type="entry name" value="NS1"/>
</dbReference>
<dbReference type="InterPro" id="IPR000256">
    <property type="entry name" value="NS1A"/>
</dbReference>
<dbReference type="InterPro" id="IPR038064">
    <property type="entry name" value="NS1A_effect_dom-like_sf"/>
</dbReference>
<dbReference type="InterPro" id="IPR009068">
    <property type="entry name" value="uS15_NS1_RNA-bd_sf"/>
</dbReference>
<dbReference type="Pfam" id="PF00600">
    <property type="entry name" value="Flu_NS1"/>
    <property type="match status" value="1"/>
</dbReference>
<dbReference type="SUPFAM" id="SSF143021">
    <property type="entry name" value="Ns1 effector domain-like"/>
    <property type="match status" value="1"/>
</dbReference>
<dbReference type="SUPFAM" id="SSF47060">
    <property type="entry name" value="S15/NS1 RNA-binding domain"/>
    <property type="match status" value="1"/>
</dbReference>
<reference key="1">
    <citation type="submission" date="2005-10" db="EMBL/GenBank/DDBJ databases">
        <title>The NIAID influenza genome sequencing project.</title>
        <authorList>
            <person name="Ghedin E."/>
            <person name="Spiro D."/>
            <person name="Miller N."/>
            <person name="Zaborsky J."/>
            <person name="Feldblyum T."/>
            <person name="Subbu V."/>
            <person name="Shumway M."/>
            <person name="Sparenborg J."/>
            <person name="Groveman L."/>
            <person name="Halpin R."/>
            <person name="Sitz J."/>
            <person name="Koo H."/>
            <person name="Salzberg S.L."/>
            <person name="Webster R.G."/>
            <person name="Hoffmann E."/>
            <person name="Krauss S."/>
            <person name="Naeve C."/>
            <person name="Bao Y."/>
            <person name="Bolotov P."/>
            <person name="Dernovoy D."/>
            <person name="Kiryutin B."/>
            <person name="Lipman D.J."/>
            <person name="Tatusova T."/>
        </authorList>
    </citation>
    <scope>NUCLEOTIDE SEQUENCE [GENOMIC RNA]</scope>
</reference>
<accession>Q38SQ2</accession>
<organismHost>
    <name type="scientific">Aves</name>
    <dbReference type="NCBI Taxonomy" id="8782"/>
</organismHost>
<organismHost>
    <name type="scientific">Cetacea</name>
    <name type="common">whales</name>
    <dbReference type="NCBI Taxonomy" id="9721"/>
</organismHost>
<organismHost>
    <name type="scientific">Homo sapiens</name>
    <name type="common">Human</name>
    <dbReference type="NCBI Taxonomy" id="9606"/>
</organismHost>
<organismHost>
    <name type="scientific">Phocidae</name>
    <name type="common">true seals</name>
    <dbReference type="NCBI Taxonomy" id="9709"/>
</organismHost>
<organismHost>
    <name type="scientific">Sus scrofa</name>
    <name type="common">Pig</name>
    <dbReference type="NCBI Taxonomy" id="9823"/>
</organismHost>
<feature type="chain" id="PRO_0000324274" description="Non-structural protein 1">
    <location>
        <begin position="1"/>
        <end position="237"/>
    </location>
</feature>
<feature type="region of interest" description="RNA-binding and homodimerization" evidence="1">
    <location>
        <begin position="1"/>
        <end position="73"/>
    </location>
</feature>
<feature type="region of interest" description="CPSF4-binding" evidence="1">
    <location>
        <begin position="180"/>
        <end position="215"/>
    </location>
</feature>
<feature type="region of interest" description="Disordered" evidence="2">
    <location>
        <begin position="205"/>
        <end position="237"/>
    </location>
</feature>
<feature type="region of interest" description="PABPN1-binding" evidence="1">
    <location>
        <begin position="223"/>
        <end position="230"/>
    </location>
</feature>
<feature type="short sequence motif" description="Nuclear localization signal" evidence="1">
    <location>
        <begin position="34"/>
        <end position="38"/>
    </location>
</feature>
<feature type="short sequence motif" description="Nuclear export signal" evidence="1">
    <location>
        <begin position="137"/>
        <end position="146"/>
    </location>
</feature>
<feature type="compositionally biased region" description="Basic residues" evidence="2">
    <location>
        <begin position="217"/>
        <end position="237"/>
    </location>
</feature>
<evidence type="ECO:0000255" key="1">
    <source>
        <dbReference type="HAMAP-Rule" id="MF_04066"/>
    </source>
</evidence>
<evidence type="ECO:0000256" key="2">
    <source>
        <dbReference type="SAM" id="MobiDB-lite"/>
    </source>
</evidence>
<proteinExistence type="evidence at protein level"/>
<comment type="function">
    <text evidence="1">Inhibits post-transcriptional processing of cellular pre-mRNA, by binding and inhibiting two cellular proteins that are required for the 3'-end processing of cellular pre-mRNAs: the 30 kDa cleavage and polyadenylation specificity factor/CPSF4 and the poly(A)-binding protein 2/PABPN1. In turn, unprocessed 3' end pre-mRNAs accumulate in the host nucleus and are no longer exported to the cytoplasm. Cellular protein synthesis is thereby shut off very early after virus infection. Viral protein synthesis is not affected by the inhibition of the cellular 3' end processing machinery because the poly(A) tails of viral mRNAs are produced by the viral polymerase through a stuttering mechanism. Prevents the establishment of the cellular antiviral state by inhibiting TRIM25-mediated RIGI ubiquitination, which normally triggers the antiviral transduction signal that leads to the activation of type I IFN genes by transcription factors IRF3 and IRF7. Also binds poly(A) and U6 snRNA. Inhibits the integrated stress response (ISR) in the infected cell by blocking dsRNA binding by EIF2AK2/PKR and further phosphorylation of EIF2S1/EIF-2ALPHA. Stress granule formation is thus inhibited, which allows protein synthesis and viral replication.</text>
</comment>
<comment type="subunit">
    <text evidence="1">Homodimer. Interacts with host TRIM25 (via coiled coil); this interaction specifically inhibits TRIM25 multimerization and TRIM25-mediated RIGI CARD ubiquitination. Interacts with human EIF2AK2/PKR, CPSF4, IVNS1ABP and PABPN1.</text>
</comment>
<comment type="subcellular location">
    <subcellularLocation>
        <location evidence="1">Host nucleus</location>
    </subcellularLocation>
    <subcellularLocation>
        <location evidence="1">Host cytoplasm</location>
    </subcellularLocation>
    <text evidence="1">In uninfected, transfected cells, NS1 is localized in the nucleus. Only in virus infected cells, the nuclear export signal is unveiled, presumably by a viral protein, and a fraction of NS1 is exported in the cytoplasm.</text>
</comment>
<comment type="alternative products">
    <event type="alternative splicing"/>
    <isoform>
        <id>Q38SQ2-1</id>
        <name>NS1</name>
        <sequence type="displayed"/>
    </isoform>
    <isoform>
        <id>Q38SQ3-1</id>
        <name>NEP</name>
        <name>NS2</name>
        <sequence type="external"/>
    </isoform>
</comment>
<comment type="domain">
    <text evidence="1">The dsRNA-binding region is required for suppression of RNA silencing.</text>
</comment>
<comment type="PTM">
    <text evidence="1">Upon interferon induction, ISGylated via host HERC5; this results in the impairment of NS1 interaction with RNA targets due to its inability to form homodimers and to interact with host EIF2AK2/PKR.</text>
</comment>
<comment type="similarity">
    <text evidence="1">Belongs to the influenza A viruses NS1 family.</text>
</comment>
<organism>
    <name type="scientific">Influenza A virus (strain A/Hong Kong/5/1983 H3N2)</name>
    <dbReference type="NCBI Taxonomy" id="387159"/>
    <lineage>
        <taxon>Viruses</taxon>
        <taxon>Riboviria</taxon>
        <taxon>Orthornavirae</taxon>
        <taxon>Negarnaviricota</taxon>
        <taxon>Polyploviricotina</taxon>
        <taxon>Insthoviricetes</taxon>
        <taxon>Articulavirales</taxon>
        <taxon>Orthomyxoviridae</taxon>
        <taxon>Alphainfluenzavirus</taxon>
        <taxon>Alphainfluenzavirus influenzae</taxon>
        <taxon>Influenza A virus</taxon>
    </lineage>
</organism>
<gene>
    <name evidence="1" type="primary">NS</name>
</gene>
<keyword id="KW-0002">3D-structure</keyword>
<keyword id="KW-0025">Alternative splicing</keyword>
<keyword id="KW-1262">Eukaryotic host gene expression shutoff by virus</keyword>
<keyword id="KW-1035">Host cytoplasm</keyword>
<keyword id="KW-1190">Host gene expression shutoff by virus</keyword>
<keyword id="KW-1192">Host mRNA suppression by virus</keyword>
<keyword id="KW-1048">Host nucleus</keyword>
<keyword id="KW-0945">Host-virus interaction</keyword>
<keyword id="KW-1090">Inhibition of host innate immune response by virus</keyword>
<keyword id="KW-1114">Inhibition of host interferon signaling pathway by virus</keyword>
<keyword id="KW-1102">Inhibition of host PKR by virus</keyword>
<keyword id="KW-1103">Inhibition of host pre-mRNA processing by virus</keyword>
<keyword id="KW-1088">Inhibition of host RIG-I by virus</keyword>
<keyword id="KW-1113">Inhibition of host RLR pathway by virus</keyword>
<keyword id="KW-0922">Interferon antiviral system evasion</keyword>
<keyword id="KW-0694">RNA-binding</keyword>
<keyword id="KW-0832">Ubl conjugation</keyword>
<keyword id="KW-0899">Viral immunoevasion</keyword>